<proteinExistence type="inferred from homology"/>
<accession>A3P7M8</accession>
<protein>
    <recommendedName>
        <fullName evidence="1">Tryptophan synthase alpha chain</fullName>
        <ecNumber evidence="1">4.2.1.20</ecNumber>
    </recommendedName>
</protein>
<reference key="1">
    <citation type="journal article" date="2010" name="Genome Biol. Evol.">
        <title>Continuing evolution of Burkholderia mallei through genome reduction and large-scale rearrangements.</title>
        <authorList>
            <person name="Losada L."/>
            <person name="Ronning C.M."/>
            <person name="DeShazer D."/>
            <person name="Woods D."/>
            <person name="Fedorova N."/>
            <person name="Kim H.S."/>
            <person name="Shabalina S.A."/>
            <person name="Pearson T.R."/>
            <person name="Brinkac L."/>
            <person name="Tan P."/>
            <person name="Nandi T."/>
            <person name="Crabtree J."/>
            <person name="Badger J."/>
            <person name="Beckstrom-Sternberg S."/>
            <person name="Saqib M."/>
            <person name="Schutzer S.E."/>
            <person name="Keim P."/>
            <person name="Nierman W.C."/>
        </authorList>
    </citation>
    <scope>NUCLEOTIDE SEQUENCE [LARGE SCALE GENOMIC DNA]</scope>
    <source>
        <strain>1106a</strain>
    </source>
</reference>
<organism>
    <name type="scientific">Burkholderia pseudomallei (strain 1106a)</name>
    <dbReference type="NCBI Taxonomy" id="357348"/>
    <lineage>
        <taxon>Bacteria</taxon>
        <taxon>Pseudomonadati</taxon>
        <taxon>Pseudomonadota</taxon>
        <taxon>Betaproteobacteria</taxon>
        <taxon>Burkholderiales</taxon>
        <taxon>Burkholderiaceae</taxon>
        <taxon>Burkholderia</taxon>
        <taxon>pseudomallei group</taxon>
    </lineage>
</organism>
<dbReference type="EC" id="4.2.1.20" evidence="1"/>
<dbReference type="EMBL" id="CP000573">
    <property type="protein sequence ID" value="ABN94838.1"/>
    <property type="molecule type" value="Genomic_DNA"/>
</dbReference>
<dbReference type="RefSeq" id="WP_004537299.1">
    <property type="nucleotide sequence ID" value="NC_009078.1"/>
</dbReference>
<dbReference type="SMR" id="A3P7M8"/>
<dbReference type="KEGG" id="bpl:BURPS1106A_A2305"/>
<dbReference type="HOGENOM" id="CLU_016734_0_0_4"/>
<dbReference type="UniPathway" id="UPA00035">
    <property type="reaction ID" value="UER00044"/>
</dbReference>
<dbReference type="Proteomes" id="UP000006738">
    <property type="component" value="Chromosome II"/>
</dbReference>
<dbReference type="GO" id="GO:0005829">
    <property type="term" value="C:cytosol"/>
    <property type="evidence" value="ECO:0007669"/>
    <property type="project" value="TreeGrafter"/>
</dbReference>
<dbReference type="GO" id="GO:0004834">
    <property type="term" value="F:tryptophan synthase activity"/>
    <property type="evidence" value="ECO:0007669"/>
    <property type="project" value="UniProtKB-UniRule"/>
</dbReference>
<dbReference type="CDD" id="cd04724">
    <property type="entry name" value="Tryptophan_synthase_alpha"/>
    <property type="match status" value="1"/>
</dbReference>
<dbReference type="FunFam" id="3.20.20.70:FF:000037">
    <property type="entry name" value="Tryptophan synthase alpha chain"/>
    <property type="match status" value="1"/>
</dbReference>
<dbReference type="Gene3D" id="3.20.20.70">
    <property type="entry name" value="Aldolase class I"/>
    <property type="match status" value="1"/>
</dbReference>
<dbReference type="HAMAP" id="MF_00131">
    <property type="entry name" value="Trp_synth_alpha"/>
    <property type="match status" value="1"/>
</dbReference>
<dbReference type="InterPro" id="IPR013785">
    <property type="entry name" value="Aldolase_TIM"/>
</dbReference>
<dbReference type="InterPro" id="IPR011060">
    <property type="entry name" value="RibuloseP-bd_barrel"/>
</dbReference>
<dbReference type="InterPro" id="IPR018204">
    <property type="entry name" value="Trp_synthase_alpha_AS"/>
</dbReference>
<dbReference type="InterPro" id="IPR002028">
    <property type="entry name" value="Trp_synthase_suA"/>
</dbReference>
<dbReference type="NCBIfam" id="TIGR00262">
    <property type="entry name" value="trpA"/>
    <property type="match status" value="1"/>
</dbReference>
<dbReference type="PANTHER" id="PTHR43406:SF1">
    <property type="entry name" value="TRYPTOPHAN SYNTHASE ALPHA CHAIN, CHLOROPLASTIC"/>
    <property type="match status" value="1"/>
</dbReference>
<dbReference type="PANTHER" id="PTHR43406">
    <property type="entry name" value="TRYPTOPHAN SYNTHASE, ALPHA CHAIN"/>
    <property type="match status" value="1"/>
</dbReference>
<dbReference type="Pfam" id="PF00290">
    <property type="entry name" value="Trp_syntA"/>
    <property type="match status" value="1"/>
</dbReference>
<dbReference type="SUPFAM" id="SSF51366">
    <property type="entry name" value="Ribulose-phoshate binding barrel"/>
    <property type="match status" value="1"/>
</dbReference>
<dbReference type="PROSITE" id="PS00167">
    <property type="entry name" value="TRP_SYNTHASE_ALPHA"/>
    <property type="match status" value="1"/>
</dbReference>
<gene>
    <name evidence="1" type="primary">trpA</name>
    <name type="ordered locus">BURPS1106A_A2305</name>
</gene>
<comment type="function">
    <text evidence="1">The alpha subunit is responsible for the aldol cleavage of indoleglycerol phosphate to indole and glyceraldehyde 3-phosphate.</text>
</comment>
<comment type="catalytic activity">
    <reaction evidence="1">
        <text>(1S,2R)-1-C-(indol-3-yl)glycerol 3-phosphate + L-serine = D-glyceraldehyde 3-phosphate + L-tryptophan + H2O</text>
        <dbReference type="Rhea" id="RHEA:10532"/>
        <dbReference type="ChEBI" id="CHEBI:15377"/>
        <dbReference type="ChEBI" id="CHEBI:33384"/>
        <dbReference type="ChEBI" id="CHEBI:57912"/>
        <dbReference type="ChEBI" id="CHEBI:58866"/>
        <dbReference type="ChEBI" id="CHEBI:59776"/>
        <dbReference type="EC" id="4.2.1.20"/>
    </reaction>
</comment>
<comment type="pathway">
    <text evidence="1">Amino-acid biosynthesis; L-tryptophan biosynthesis; L-tryptophan from chorismate: step 5/5.</text>
</comment>
<comment type="subunit">
    <text evidence="1">Tetramer of two alpha and two beta chains.</text>
</comment>
<comment type="similarity">
    <text evidence="1">Belongs to the TrpA family.</text>
</comment>
<evidence type="ECO:0000255" key="1">
    <source>
        <dbReference type="HAMAP-Rule" id="MF_00131"/>
    </source>
</evidence>
<keyword id="KW-0028">Amino-acid biosynthesis</keyword>
<keyword id="KW-0057">Aromatic amino acid biosynthesis</keyword>
<keyword id="KW-0456">Lyase</keyword>
<keyword id="KW-0822">Tryptophan biosynthesis</keyword>
<feature type="chain" id="PRO_1000018178" description="Tryptophan synthase alpha chain">
    <location>
        <begin position="1"/>
        <end position="271"/>
    </location>
</feature>
<feature type="active site" description="Proton acceptor" evidence="1">
    <location>
        <position position="49"/>
    </location>
</feature>
<feature type="active site" description="Proton acceptor" evidence="1">
    <location>
        <position position="60"/>
    </location>
</feature>
<sequence length="271" mass="27950">MSRIQNTFAALAAQGRKGLIPFITAGDPDPAKTVELMHALAEGGADVIELGVPFSDPMADGPVIQRSSERALAKGVTLHSVLDDVKRFRARDQKTPVVLMGYANPIERMGADAFAAAARDAGVDGVLVVDYPPEESHDFAAKMRAAGIDPIFLLAPTSTDDRIAAVGQVASGYVYYVSLKGVTGAANLDVSSIAGKIPAIKSRVPLPVGVGFGIRDAATARAVAEVADAVVIGSRLVQLLEQAAPERAAAELAGFVAELRAAIDGAAKPAA</sequence>
<name>TRPA_BURP0</name>